<name>PRMA_CLOTE</name>
<organism>
    <name type="scientific">Clostridium tetani (strain Massachusetts / E88)</name>
    <dbReference type="NCBI Taxonomy" id="212717"/>
    <lineage>
        <taxon>Bacteria</taxon>
        <taxon>Bacillati</taxon>
        <taxon>Bacillota</taxon>
        <taxon>Clostridia</taxon>
        <taxon>Eubacteriales</taxon>
        <taxon>Clostridiaceae</taxon>
        <taxon>Clostridium</taxon>
    </lineage>
</organism>
<evidence type="ECO:0000255" key="1">
    <source>
        <dbReference type="HAMAP-Rule" id="MF_00735"/>
    </source>
</evidence>
<comment type="function">
    <text evidence="1">Methylates ribosomal protein L11.</text>
</comment>
<comment type="catalytic activity">
    <reaction evidence="1">
        <text>L-lysyl-[protein] + 3 S-adenosyl-L-methionine = N(6),N(6),N(6)-trimethyl-L-lysyl-[protein] + 3 S-adenosyl-L-homocysteine + 3 H(+)</text>
        <dbReference type="Rhea" id="RHEA:54192"/>
        <dbReference type="Rhea" id="RHEA-COMP:9752"/>
        <dbReference type="Rhea" id="RHEA-COMP:13826"/>
        <dbReference type="ChEBI" id="CHEBI:15378"/>
        <dbReference type="ChEBI" id="CHEBI:29969"/>
        <dbReference type="ChEBI" id="CHEBI:57856"/>
        <dbReference type="ChEBI" id="CHEBI:59789"/>
        <dbReference type="ChEBI" id="CHEBI:61961"/>
    </reaction>
</comment>
<comment type="subcellular location">
    <subcellularLocation>
        <location evidence="1">Cytoplasm</location>
    </subcellularLocation>
</comment>
<comment type="similarity">
    <text evidence="1">Belongs to the methyltransferase superfamily. PrmA family.</text>
</comment>
<gene>
    <name evidence="1" type="primary">prmA</name>
    <name type="ordered locus">CTC_02029</name>
</gene>
<sequence length="314" mass="35480">MKKEDKDWIELTIITSSQAVEAVSAILYNTDVQGIAIEDSKDVEFQKKNKGDWDYFDETLINIEEGAVIKAYYREDKNFMKYLKYIEESVKNLEQLGFDKGKGIVTTSKVNEEDWENNWKKYYKPTKVGEKIVIKPIWEEYGENPEEIILELDPGMAFGTGTHETTRMCIESLEKYVKEEDVVFDIGTGSGILGIAAAKLNAKKVIGVDLDEVAVDSAKKNVGFNHLDNIEILHGDLMEVVKGKCNIIVANIIADIIILLSKDVKKFLEDGGYFISSGIIKDRKEEVVDSLKENGFKIEEIKEQGEWVCVVASL</sequence>
<accession>Q892R2</accession>
<keyword id="KW-0963">Cytoplasm</keyword>
<keyword id="KW-0489">Methyltransferase</keyword>
<keyword id="KW-1185">Reference proteome</keyword>
<keyword id="KW-0949">S-adenosyl-L-methionine</keyword>
<keyword id="KW-0808">Transferase</keyword>
<protein>
    <recommendedName>
        <fullName evidence="1">Ribosomal protein L11 methyltransferase</fullName>
        <shortName evidence="1">L11 Mtase</shortName>
        <ecNumber evidence="1">2.1.1.-</ecNumber>
    </recommendedName>
</protein>
<proteinExistence type="inferred from homology"/>
<reference key="1">
    <citation type="journal article" date="2003" name="Proc. Natl. Acad. Sci. U.S.A.">
        <title>The genome sequence of Clostridium tetani, the causative agent of tetanus disease.</title>
        <authorList>
            <person name="Brueggemann H."/>
            <person name="Baeumer S."/>
            <person name="Fricke W.F."/>
            <person name="Wiezer A."/>
            <person name="Liesegang H."/>
            <person name="Decker I."/>
            <person name="Herzberg C."/>
            <person name="Martinez-Arias R."/>
            <person name="Merkl R."/>
            <person name="Henne A."/>
            <person name="Gottschalk G."/>
        </authorList>
    </citation>
    <scope>NUCLEOTIDE SEQUENCE [LARGE SCALE GENOMIC DNA]</scope>
    <source>
        <strain>Massachusetts / E88</strain>
    </source>
</reference>
<dbReference type="EC" id="2.1.1.-" evidence="1"/>
<dbReference type="EMBL" id="AE015927">
    <property type="protein sequence ID" value="AAO36532.1"/>
    <property type="molecule type" value="Genomic_DNA"/>
</dbReference>
<dbReference type="RefSeq" id="WP_011100190.1">
    <property type="nucleotide sequence ID" value="NC_004557.1"/>
</dbReference>
<dbReference type="SMR" id="Q892R2"/>
<dbReference type="STRING" id="212717.CTC_02029"/>
<dbReference type="GeneID" id="24254471"/>
<dbReference type="KEGG" id="ctc:CTC_02029"/>
<dbReference type="HOGENOM" id="CLU_049382_0_1_9"/>
<dbReference type="OrthoDB" id="9785995at2"/>
<dbReference type="Proteomes" id="UP000001412">
    <property type="component" value="Chromosome"/>
</dbReference>
<dbReference type="GO" id="GO:0005737">
    <property type="term" value="C:cytoplasm"/>
    <property type="evidence" value="ECO:0007669"/>
    <property type="project" value="UniProtKB-SubCell"/>
</dbReference>
<dbReference type="GO" id="GO:0016279">
    <property type="term" value="F:protein-lysine N-methyltransferase activity"/>
    <property type="evidence" value="ECO:0007669"/>
    <property type="project" value="RHEA"/>
</dbReference>
<dbReference type="GO" id="GO:0032259">
    <property type="term" value="P:methylation"/>
    <property type="evidence" value="ECO:0007669"/>
    <property type="project" value="UniProtKB-KW"/>
</dbReference>
<dbReference type="CDD" id="cd02440">
    <property type="entry name" value="AdoMet_MTases"/>
    <property type="match status" value="1"/>
</dbReference>
<dbReference type="Gene3D" id="3.40.50.150">
    <property type="entry name" value="Vaccinia Virus protein VP39"/>
    <property type="match status" value="1"/>
</dbReference>
<dbReference type="HAMAP" id="MF_00735">
    <property type="entry name" value="Methyltr_PrmA"/>
    <property type="match status" value="1"/>
</dbReference>
<dbReference type="InterPro" id="IPR050078">
    <property type="entry name" value="Ribosomal_L11_MeTrfase_PrmA"/>
</dbReference>
<dbReference type="InterPro" id="IPR004498">
    <property type="entry name" value="Ribosomal_PrmA_MeTrfase"/>
</dbReference>
<dbReference type="InterPro" id="IPR029063">
    <property type="entry name" value="SAM-dependent_MTases_sf"/>
</dbReference>
<dbReference type="NCBIfam" id="TIGR00406">
    <property type="entry name" value="prmA"/>
    <property type="match status" value="1"/>
</dbReference>
<dbReference type="PANTHER" id="PTHR43648">
    <property type="entry name" value="ELECTRON TRANSFER FLAVOPROTEIN BETA SUBUNIT LYSINE METHYLTRANSFERASE"/>
    <property type="match status" value="1"/>
</dbReference>
<dbReference type="PANTHER" id="PTHR43648:SF1">
    <property type="entry name" value="ELECTRON TRANSFER FLAVOPROTEIN BETA SUBUNIT LYSINE METHYLTRANSFERASE"/>
    <property type="match status" value="1"/>
</dbReference>
<dbReference type="Pfam" id="PF06325">
    <property type="entry name" value="PrmA"/>
    <property type="match status" value="1"/>
</dbReference>
<dbReference type="PIRSF" id="PIRSF000401">
    <property type="entry name" value="RPL11_MTase"/>
    <property type="match status" value="1"/>
</dbReference>
<dbReference type="SUPFAM" id="SSF53335">
    <property type="entry name" value="S-adenosyl-L-methionine-dependent methyltransferases"/>
    <property type="match status" value="1"/>
</dbReference>
<feature type="chain" id="PRO_0000192254" description="Ribosomal protein L11 methyltransferase">
    <location>
        <begin position="1"/>
        <end position="314"/>
    </location>
</feature>
<feature type="binding site" evidence="1">
    <location>
        <position position="166"/>
    </location>
    <ligand>
        <name>S-adenosyl-L-methionine</name>
        <dbReference type="ChEBI" id="CHEBI:59789"/>
    </ligand>
</feature>
<feature type="binding site" evidence="1">
    <location>
        <position position="187"/>
    </location>
    <ligand>
        <name>S-adenosyl-L-methionine</name>
        <dbReference type="ChEBI" id="CHEBI:59789"/>
    </ligand>
</feature>
<feature type="binding site" evidence="1">
    <location>
        <position position="209"/>
    </location>
    <ligand>
        <name>S-adenosyl-L-methionine</name>
        <dbReference type="ChEBI" id="CHEBI:59789"/>
    </ligand>
</feature>
<feature type="binding site" evidence="1">
    <location>
        <position position="251"/>
    </location>
    <ligand>
        <name>S-adenosyl-L-methionine</name>
        <dbReference type="ChEBI" id="CHEBI:59789"/>
    </ligand>
</feature>